<accession>Q89WM4</accession>
<feature type="chain" id="PRO_0000142129" description="Imidazole glycerol phosphate synthase subunit HisF">
    <location>
        <begin position="1"/>
        <end position="257"/>
    </location>
</feature>
<feature type="active site" evidence="1">
    <location>
        <position position="11"/>
    </location>
</feature>
<feature type="active site" evidence="1">
    <location>
        <position position="130"/>
    </location>
</feature>
<comment type="function">
    <text evidence="1">IGPS catalyzes the conversion of PRFAR and glutamine to IGP, AICAR and glutamate. The HisF subunit catalyzes the cyclization activity that produces IGP and AICAR from PRFAR using the ammonia provided by the HisH subunit.</text>
</comment>
<comment type="catalytic activity">
    <reaction evidence="1">
        <text>5-[(5-phospho-1-deoxy-D-ribulos-1-ylimino)methylamino]-1-(5-phospho-beta-D-ribosyl)imidazole-4-carboxamide + L-glutamine = D-erythro-1-(imidazol-4-yl)glycerol 3-phosphate + 5-amino-1-(5-phospho-beta-D-ribosyl)imidazole-4-carboxamide + L-glutamate + H(+)</text>
        <dbReference type="Rhea" id="RHEA:24793"/>
        <dbReference type="ChEBI" id="CHEBI:15378"/>
        <dbReference type="ChEBI" id="CHEBI:29985"/>
        <dbReference type="ChEBI" id="CHEBI:58278"/>
        <dbReference type="ChEBI" id="CHEBI:58359"/>
        <dbReference type="ChEBI" id="CHEBI:58475"/>
        <dbReference type="ChEBI" id="CHEBI:58525"/>
        <dbReference type="EC" id="4.3.2.10"/>
    </reaction>
</comment>
<comment type="pathway">
    <text evidence="1">Amino-acid biosynthesis; L-histidine biosynthesis; L-histidine from 5-phospho-alpha-D-ribose 1-diphosphate: step 5/9.</text>
</comment>
<comment type="subunit">
    <text evidence="1">Heterodimer of HisH and HisF.</text>
</comment>
<comment type="subcellular location">
    <subcellularLocation>
        <location evidence="1">Cytoplasm</location>
    </subcellularLocation>
</comment>
<comment type="similarity">
    <text evidence="1">Belongs to the HisA/HisF family.</text>
</comment>
<evidence type="ECO:0000255" key="1">
    <source>
        <dbReference type="HAMAP-Rule" id="MF_01013"/>
    </source>
</evidence>
<protein>
    <recommendedName>
        <fullName evidence="1">Imidazole glycerol phosphate synthase subunit HisF</fullName>
        <ecNumber evidence="1">4.3.2.10</ecNumber>
    </recommendedName>
    <alternativeName>
        <fullName evidence="1">IGP synthase cyclase subunit</fullName>
    </alternativeName>
    <alternativeName>
        <fullName evidence="1">IGP synthase subunit HisF</fullName>
    </alternativeName>
    <alternativeName>
        <fullName evidence="1">ImGP synthase subunit HisF</fullName>
        <shortName evidence="1">IGPS subunit HisF</shortName>
    </alternativeName>
</protein>
<proteinExistence type="inferred from homology"/>
<sequence>MFKVRVIPCLDVKDGRVVKGVNFVDLRDAGDPVEAAIAYDAAGADELTFLDITATHENRGIMLDVVRRTAEACFMPVTVGGGVREVDDIKTLLRAGADKVSINSAAVSRREFVKEAAEKFGEQCVVVAIDAKRVKRPGGDRWEIFTHGGRNATGIDAIEYAQEVVSLGAGEILLTSMDRDGTRQGFDIPLTRAIADSIPVPVIASGGVGNLDHLVDGIRDGHATAVLAASIFHFGEFTVREAKEHMARRGLPMRLDA</sequence>
<gene>
    <name evidence="1" type="primary">hisF</name>
    <name type="ordered locus">blr0654</name>
</gene>
<reference key="1">
    <citation type="journal article" date="2002" name="DNA Res.">
        <title>Complete genomic sequence of nitrogen-fixing symbiotic bacterium Bradyrhizobium japonicum USDA110.</title>
        <authorList>
            <person name="Kaneko T."/>
            <person name="Nakamura Y."/>
            <person name="Sato S."/>
            <person name="Minamisawa K."/>
            <person name="Uchiumi T."/>
            <person name="Sasamoto S."/>
            <person name="Watanabe A."/>
            <person name="Idesawa K."/>
            <person name="Iriguchi M."/>
            <person name="Kawashima K."/>
            <person name="Kohara M."/>
            <person name="Matsumoto M."/>
            <person name="Shimpo S."/>
            <person name="Tsuruoka H."/>
            <person name="Wada T."/>
            <person name="Yamada M."/>
            <person name="Tabata S."/>
        </authorList>
    </citation>
    <scope>NUCLEOTIDE SEQUENCE [LARGE SCALE GENOMIC DNA]</scope>
    <source>
        <strain>JCM 10833 / BCRC 13528 / IAM 13628 / NBRC 14792 / USDA 110</strain>
    </source>
</reference>
<dbReference type="EC" id="4.3.2.10" evidence="1"/>
<dbReference type="EMBL" id="BA000040">
    <property type="protein sequence ID" value="BAC45919.1"/>
    <property type="molecule type" value="Genomic_DNA"/>
</dbReference>
<dbReference type="RefSeq" id="NP_767294.1">
    <property type="nucleotide sequence ID" value="NC_004463.1"/>
</dbReference>
<dbReference type="RefSeq" id="WP_011083481.1">
    <property type="nucleotide sequence ID" value="NC_004463.1"/>
</dbReference>
<dbReference type="SMR" id="Q89WM4"/>
<dbReference type="FunCoup" id="Q89WM4">
    <property type="interactions" value="693"/>
</dbReference>
<dbReference type="STRING" id="224911.AAV28_00105"/>
<dbReference type="EnsemblBacteria" id="BAC45919">
    <property type="protein sequence ID" value="BAC45919"/>
    <property type="gene ID" value="BAC45919"/>
</dbReference>
<dbReference type="GeneID" id="46487927"/>
<dbReference type="KEGG" id="bja:blr0654"/>
<dbReference type="PATRIC" id="fig|224911.44.peg.23"/>
<dbReference type="eggNOG" id="COG0107">
    <property type="taxonomic scope" value="Bacteria"/>
</dbReference>
<dbReference type="HOGENOM" id="CLU_048577_4_0_5"/>
<dbReference type="InParanoid" id="Q89WM4"/>
<dbReference type="OrthoDB" id="9781903at2"/>
<dbReference type="PhylomeDB" id="Q89WM4"/>
<dbReference type="UniPathway" id="UPA00031">
    <property type="reaction ID" value="UER00010"/>
</dbReference>
<dbReference type="Proteomes" id="UP000002526">
    <property type="component" value="Chromosome"/>
</dbReference>
<dbReference type="GO" id="GO:0005737">
    <property type="term" value="C:cytoplasm"/>
    <property type="evidence" value="ECO:0007669"/>
    <property type="project" value="UniProtKB-SubCell"/>
</dbReference>
<dbReference type="GO" id="GO:0000107">
    <property type="term" value="F:imidazoleglycerol-phosphate synthase activity"/>
    <property type="evidence" value="ECO:0000318"/>
    <property type="project" value="GO_Central"/>
</dbReference>
<dbReference type="GO" id="GO:0016829">
    <property type="term" value="F:lyase activity"/>
    <property type="evidence" value="ECO:0007669"/>
    <property type="project" value="UniProtKB-KW"/>
</dbReference>
<dbReference type="GO" id="GO:0000105">
    <property type="term" value="P:L-histidine biosynthetic process"/>
    <property type="evidence" value="ECO:0007669"/>
    <property type="project" value="UniProtKB-UniRule"/>
</dbReference>
<dbReference type="CDD" id="cd04731">
    <property type="entry name" value="HisF"/>
    <property type="match status" value="1"/>
</dbReference>
<dbReference type="FunFam" id="3.20.20.70:FF:000006">
    <property type="entry name" value="Imidazole glycerol phosphate synthase subunit HisF"/>
    <property type="match status" value="1"/>
</dbReference>
<dbReference type="Gene3D" id="3.20.20.70">
    <property type="entry name" value="Aldolase class I"/>
    <property type="match status" value="1"/>
</dbReference>
<dbReference type="HAMAP" id="MF_01013">
    <property type="entry name" value="HisF"/>
    <property type="match status" value="1"/>
</dbReference>
<dbReference type="InterPro" id="IPR013785">
    <property type="entry name" value="Aldolase_TIM"/>
</dbReference>
<dbReference type="InterPro" id="IPR006062">
    <property type="entry name" value="His_biosynth"/>
</dbReference>
<dbReference type="InterPro" id="IPR004651">
    <property type="entry name" value="HisF"/>
</dbReference>
<dbReference type="InterPro" id="IPR050064">
    <property type="entry name" value="IGPS_HisA/HisF"/>
</dbReference>
<dbReference type="InterPro" id="IPR011060">
    <property type="entry name" value="RibuloseP-bd_barrel"/>
</dbReference>
<dbReference type="NCBIfam" id="TIGR00735">
    <property type="entry name" value="hisF"/>
    <property type="match status" value="1"/>
</dbReference>
<dbReference type="PANTHER" id="PTHR21235:SF2">
    <property type="entry name" value="IMIDAZOLE GLYCEROL PHOSPHATE SYNTHASE HISHF"/>
    <property type="match status" value="1"/>
</dbReference>
<dbReference type="PANTHER" id="PTHR21235">
    <property type="entry name" value="IMIDAZOLE GLYCEROL PHOSPHATE SYNTHASE SUBUNIT HISF/H IGP SYNTHASE SUBUNIT HISF/H"/>
    <property type="match status" value="1"/>
</dbReference>
<dbReference type="Pfam" id="PF00977">
    <property type="entry name" value="His_biosynth"/>
    <property type="match status" value="1"/>
</dbReference>
<dbReference type="SUPFAM" id="SSF51366">
    <property type="entry name" value="Ribulose-phoshate binding barrel"/>
    <property type="match status" value="1"/>
</dbReference>
<name>HIS6_BRADU</name>
<organism>
    <name type="scientific">Bradyrhizobium diazoefficiens (strain JCM 10833 / BCRC 13528 / IAM 13628 / NBRC 14792 / USDA 110)</name>
    <dbReference type="NCBI Taxonomy" id="224911"/>
    <lineage>
        <taxon>Bacteria</taxon>
        <taxon>Pseudomonadati</taxon>
        <taxon>Pseudomonadota</taxon>
        <taxon>Alphaproteobacteria</taxon>
        <taxon>Hyphomicrobiales</taxon>
        <taxon>Nitrobacteraceae</taxon>
        <taxon>Bradyrhizobium</taxon>
    </lineage>
</organism>
<keyword id="KW-0028">Amino-acid biosynthesis</keyword>
<keyword id="KW-0963">Cytoplasm</keyword>
<keyword id="KW-0368">Histidine biosynthesis</keyword>
<keyword id="KW-0456">Lyase</keyword>
<keyword id="KW-1185">Reference proteome</keyword>